<reference key="1">
    <citation type="journal article" date="2003" name="Nature">
        <title>The genome of a motile marine Synechococcus.</title>
        <authorList>
            <person name="Palenik B."/>
            <person name="Brahamsha B."/>
            <person name="Larimer F.W."/>
            <person name="Land M.L."/>
            <person name="Hauser L."/>
            <person name="Chain P."/>
            <person name="Lamerdin J.E."/>
            <person name="Regala W."/>
            <person name="Allen E.E."/>
            <person name="McCarren J."/>
            <person name="Paulsen I.T."/>
            <person name="Dufresne A."/>
            <person name="Partensky F."/>
            <person name="Webb E.A."/>
            <person name="Waterbury J."/>
        </authorList>
    </citation>
    <scope>NUCLEOTIDE SEQUENCE [LARGE SCALE GENOMIC DNA]</scope>
    <source>
        <strain>WH8102</strain>
    </source>
</reference>
<gene>
    <name evidence="1" type="primary">rplB</name>
    <name evidence="1" type="synonym">rpl2</name>
    <name type="ordered locus">SYNW2070</name>
</gene>
<dbReference type="EMBL" id="BX569694">
    <property type="protein sequence ID" value="CAE08585.1"/>
    <property type="molecule type" value="Genomic_DNA"/>
</dbReference>
<dbReference type="RefSeq" id="WP_011128928.1">
    <property type="nucleotide sequence ID" value="NC_005070.1"/>
</dbReference>
<dbReference type="SMR" id="Q7U4J7"/>
<dbReference type="STRING" id="84588.SYNW2070"/>
<dbReference type="KEGG" id="syw:SYNW2070"/>
<dbReference type="eggNOG" id="COG0090">
    <property type="taxonomic scope" value="Bacteria"/>
</dbReference>
<dbReference type="HOGENOM" id="CLU_036235_2_1_3"/>
<dbReference type="Proteomes" id="UP000001422">
    <property type="component" value="Chromosome"/>
</dbReference>
<dbReference type="GO" id="GO:0015934">
    <property type="term" value="C:large ribosomal subunit"/>
    <property type="evidence" value="ECO:0007669"/>
    <property type="project" value="InterPro"/>
</dbReference>
<dbReference type="GO" id="GO:0019843">
    <property type="term" value="F:rRNA binding"/>
    <property type="evidence" value="ECO:0007669"/>
    <property type="project" value="UniProtKB-UniRule"/>
</dbReference>
<dbReference type="GO" id="GO:0003735">
    <property type="term" value="F:structural constituent of ribosome"/>
    <property type="evidence" value="ECO:0007669"/>
    <property type="project" value="InterPro"/>
</dbReference>
<dbReference type="GO" id="GO:0016740">
    <property type="term" value="F:transferase activity"/>
    <property type="evidence" value="ECO:0007669"/>
    <property type="project" value="InterPro"/>
</dbReference>
<dbReference type="GO" id="GO:0006412">
    <property type="term" value="P:translation"/>
    <property type="evidence" value="ECO:0007669"/>
    <property type="project" value="UniProtKB-UniRule"/>
</dbReference>
<dbReference type="FunFam" id="2.30.30.30:FF:000001">
    <property type="entry name" value="50S ribosomal protein L2"/>
    <property type="match status" value="1"/>
</dbReference>
<dbReference type="FunFam" id="2.40.50.140:FF:000003">
    <property type="entry name" value="50S ribosomal protein L2"/>
    <property type="match status" value="1"/>
</dbReference>
<dbReference type="FunFam" id="4.10.950.10:FF:000001">
    <property type="entry name" value="50S ribosomal protein L2"/>
    <property type="match status" value="1"/>
</dbReference>
<dbReference type="Gene3D" id="2.30.30.30">
    <property type="match status" value="1"/>
</dbReference>
<dbReference type="Gene3D" id="2.40.50.140">
    <property type="entry name" value="Nucleic acid-binding proteins"/>
    <property type="match status" value="1"/>
</dbReference>
<dbReference type="Gene3D" id="4.10.950.10">
    <property type="entry name" value="Ribosomal protein L2, domain 3"/>
    <property type="match status" value="1"/>
</dbReference>
<dbReference type="HAMAP" id="MF_01320_B">
    <property type="entry name" value="Ribosomal_uL2_B"/>
    <property type="match status" value="1"/>
</dbReference>
<dbReference type="InterPro" id="IPR012340">
    <property type="entry name" value="NA-bd_OB-fold"/>
</dbReference>
<dbReference type="InterPro" id="IPR014722">
    <property type="entry name" value="Rib_uL2_dom2"/>
</dbReference>
<dbReference type="InterPro" id="IPR002171">
    <property type="entry name" value="Ribosomal_uL2"/>
</dbReference>
<dbReference type="InterPro" id="IPR005880">
    <property type="entry name" value="Ribosomal_uL2_bac/org-type"/>
</dbReference>
<dbReference type="InterPro" id="IPR022669">
    <property type="entry name" value="Ribosomal_uL2_C"/>
</dbReference>
<dbReference type="InterPro" id="IPR022671">
    <property type="entry name" value="Ribosomal_uL2_CS"/>
</dbReference>
<dbReference type="InterPro" id="IPR014726">
    <property type="entry name" value="Ribosomal_uL2_dom3"/>
</dbReference>
<dbReference type="InterPro" id="IPR022666">
    <property type="entry name" value="Ribosomal_uL2_RNA-bd_dom"/>
</dbReference>
<dbReference type="InterPro" id="IPR008991">
    <property type="entry name" value="Translation_prot_SH3-like_sf"/>
</dbReference>
<dbReference type="NCBIfam" id="TIGR01171">
    <property type="entry name" value="rplB_bact"/>
    <property type="match status" value="1"/>
</dbReference>
<dbReference type="PANTHER" id="PTHR13691:SF5">
    <property type="entry name" value="LARGE RIBOSOMAL SUBUNIT PROTEIN UL2M"/>
    <property type="match status" value="1"/>
</dbReference>
<dbReference type="PANTHER" id="PTHR13691">
    <property type="entry name" value="RIBOSOMAL PROTEIN L2"/>
    <property type="match status" value="1"/>
</dbReference>
<dbReference type="Pfam" id="PF00181">
    <property type="entry name" value="Ribosomal_L2"/>
    <property type="match status" value="1"/>
</dbReference>
<dbReference type="Pfam" id="PF03947">
    <property type="entry name" value="Ribosomal_L2_C"/>
    <property type="match status" value="1"/>
</dbReference>
<dbReference type="PIRSF" id="PIRSF002158">
    <property type="entry name" value="Ribosomal_L2"/>
    <property type="match status" value="1"/>
</dbReference>
<dbReference type="SMART" id="SM01383">
    <property type="entry name" value="Ribosomal_L2"/>
    <property type="match status" value="1"/>
</dbReference>
<dbReference type="SMART" id="SM01382">
    <property type="entry name" value="Ribosomal_L2_C"/>
    <property type="match status" value="1"/>
</dbReference>
<dbReference type="SUPFAM" id="SSF50249">
    <property type="entry name" value="Nucleic acid-binding proteins"/>
    <property type="match status" value="1"/>
</dbReference>
<dbReference type="SUPFAM" id="SSF50104">
    <property type="entry name" value="Translation proteins SH3-like domain"/>
    <property type="match status" value="1"/>
</dbReference>
<dbReference type="PROSITE" id="PS00467">
    <property type="entry name" value="RIBOSOMAL_L2"/>
    <property type="match status" value="1"/>
</dbReference>
<proteinExistence type="inferred from homology"/>
<protein>
    <recommendedName>
        <fullName evidence="1">Large ribosomal subunit protein uL2</fullName>
    </recommendedName>
    <alternativeName>
        <fullName evidence="3">50S ribosomal protein L2</fullName>
    </alternativeName>
</protein>
<accession>Q7U4J7</accession>
<comment type="function">
    <text evidence="1">One of the primary rRNA binding proteins. Required for association of the 30S and 50S subunits to form the 70S ribosome, for tRNA binding and peptide bond formation. It has been suggested to have peptidyltransferase activity; this is somewhat controversial. Makes several contacts with the 16S rRNA in the 70S ribosome.</text>
</comment>
<comment type="subunit">
    <text evidence="1">Part of the 50S ribosomal subunit. Forms a bridge to the 30S subunit in the 70S ribosome.</text>
</comment>
<comment type="similarity">
    <text evidence="1">Belongs to the universal ribosomal protein uL2 family.</text>
</comment>
<feature type="chain" id="PRO_0000129638" description="Large ribosomal subunit protein uL2">
    <location>
        <begin position="1"/>
        <end position="287"/>
    </location>
</feature>
<feature type="region of interest" description="Disordered" evidence="2">
    <location>
        <begin position="221"/>
        <end position="287"/>
    </location>
</feature>
<feature type="compositionally biased region" description="Basic residues" evidence="2">
    <location>
        <begin position="258"/>
        <end position="287"/>
    </location>
</feature>
<organism>
    <name type="scientific">Parasynechococcus marenigrum (strain WH8102)</name>
    <dbReference type="NCBI Taxonomy" id="84588"/>
    <lineage>
        <taxon>Bacteria</taxon>
        <taxon>Bacillati</taxon>
        <taxon>Cyanobacteriota</taxon>
        <taxon>Cyanophyceae</taxon>
        <taxon>Synechococcales</taxon>
        <taxon>Prochlorococcaceae</taxon>
        <taxon>Parasynechococcus</taxon>
        <taxon>Parasynechococcus marenigrum</taxon>
    </lineage>
</organism>
<name>RL2_PARMW</name>
<sequence length="287" mass="31651">MAIRNFRPYTPGTRTRVVTDFSEVTGRKPERSLVVSKHRRKGRNNRGVITCRHRGGGHKRLYRVVDFRRNKHGITAKVAAIHYDPHRNARLALLFYADGEKRYILAPAGVQVGQTVVSGPDAPIENGNAMPLSAVPLGSSVHCVELYAGRGGQMVRTAGASAQVMAKEGDYVALKLPSTEVRLVRRECYATLGEVGNSEVRNTSLGKAGRRRWLGRRPQVRGSVMNPCDHPHGGGEGRAPIGRSGPVTPWGKPALGLKTRKRNKPSNRYVLRKRRKTSKRSRGGRDS</sequence>
<keyword id="KW-0687">Ribonucleoprotein</keyword>
<keyword id="KW-0689">Ribosomal protein</keyword>
<keyword id="KW-0694">RNA-binding</keyword>
<keyword id="KW-0699">rRNA-binding</keyword>
<evidence type="ECO:0000255" key="1">
    <source>
        <dbReference type="HAMAP-Rule" id="MF_01320"/>
    </source>
</evidence>
<evidence type="ECO:0000256" key="2">
    <source>
        <dbReference type="SAM" id="MobiDB-lite"/>
    </source>
</evidence>
<evidence type="ECO:0000305" key="3"/>